<proteinExistence type="inferred from homology"/>
<protein>
    <recommendedName>
        <fullName>Toxin ParE1</fullName>
    </recommendedName>
</protein>
<keyword id="KW-1185">Reference proteome</keyword>
<keyword id="KW-1277">Toxin-antitoxin system</keyword>
<sequence>MSSRYLLSPAAQAHLEEIWDCTYDRWGVDQAEQYLRELQHAIDRAAANPRIGRACDEIRPGYRKLSAGSHTLFYRVTGEGTIDVVRVLHQRMDVDRNL</sequence>
<accession>P9WHG6</accession>
<accession>L0T873</accession>
<accession>P95255</accession>
<accession>Q7D7P6</accession>
<reference key="1">
    <citation type="journal article" date="2002" name="J. Bacteriol.">
        <title>Whole-genome comparison of Mycobacterium tuberculosis clinical and laboratory strains.</title>
        <authorList>
            <person name="Fleischmann R.D."/>
            <person name="Alland D."/>
            <person name="Eisen J.A."/>
            <person name="Carpenter L."/>
            <person name="White O."/>
            <person name="Peterson J.D."/>
            <person name="DeBoy R.T."/>
            <person name="Dodson R.J."/>
            <person name="Gwinn M.L."/>
            <person name="Haft D.H."/>
            <person name="Hickey E.K."/>
            <person name="Kolonay J.F."/>
            <person name="Nelson W.C."/>
            <person name="Umayam L.A."/>
            <person name="Ermolaeva M.D."/>
            <person name="Salzberg S.L."/>
            <person name="Delcher A."/>
            <person name="Utterback T.R."/>
            <person name="Weidman J.F."/>
            <person name="Khouri H.M."/>
            <person name="Gill J."/>
            <person name="Mikula A."/>
            <person name="Bishai W."/>
            <person name="Jacobs W.R. Jr."/>
            <person name="Venter J.C."/>
            <person name="Fraser C.M."/>
        </authorList>
    </citation>
    <scope>NUCLEOTIDE SEQUENCE [LARGE SCALE GENOMIC DNA]</scope>
    <source>
        <strain>CDC 1551 / Oshkosh</strain>
    </source>
</reference>
<name>PARE1_MYCTO</name>
<organism>
    <name type="scientific">Mycobacterium tuberculosis (strain CDC 1551 / Oshkosh)</name>
    <dbReference type="NCBI Taxonomy" id="83331"/>
    <lineage>
        <taxon>Bacteria</taxon>
        <taxon>Bacillati</taxon>
        <taxon>Actinomycetota</taxon>
        <taxon>Actinomycetes</taxon>
        <taxon>Mycobacteriales</taxon>
        <taxon>Mycobacteriaceae</taxon>
        <taxon>Mycobacterium</taxon>
        <taxon>Mycobacterium tuberculosis complex</taxon>
    </lineage>
</organism>
<comment type="function">
    <text evidence="1">Toxic component of a type II toxin-antitoxin (TA) system. Its toxic effect is neutralized by coexpression with cognate antitoxin ParD1 (By similarity).</text>
</comment>
<comment type="similarity">
    <text evidence="2">Belongs to the RelE toxin family.</text>
</comment>
<feature type="chain" id="PRO_0000428190" description="Toxin ParE1">
    <location>
        <begin position="1"/>
        <end position="98"/>
    </location>
</feature>
<dbReference type="EMBL" id="AE000516">
    <property type="protein sequence ID" value="AAK46280.1"/>
    <property type="molecule type" value="Genomic_DNA"/>
</dbReference>
<dbReference type="PIR" id="C70639">
    <property type="entry name" value="C70639"/>
</dbReference>
<dbReference type="RefSeq" id="WP_003409896.1">
    <property type="nucleotide sequence ID" value="NZ_KK341227.1"/>
</dbReference>
<dbReference type="SMR" id="P9WHG6"/>
<dbReference type="KEGG" id="mtc:MT2008"/>
<dbReference type="PATRIC" id="fig|83331.31.peg.2164"/>
<dbReference type="HOGENOM" id="CLU_147162_3_0_11"/>
<dbReference type="Proteomes" id="UP000001020">
    <property type="component" value="Chromosome"/>
</dbReference>
<dbReference type="Gene3D" id="3.30.2310.20">
    <property type="entry name" value="RelE-like"/>
    <property type="match status" value="1"/>
</dbReference>
<dbReference type="InterPro" id="IPR028344">
    <property type="entry name" value="ParE1/4"/>
</dbReference>
<dbReference type="InterPro" id="IPR007712">
    <property type="entry name" value="RelE/ParE_toxin"/>
</dbReference>
<dbReference type="InterPro" id="IPR035093">
    <property type="entry name" value="RelE/ParE_toxin_dom_sf"/>
</dbReference>
<dbReference type="InterPro" id="IPR051803">
    <property type="entry name" value="TA_system_RelE-like_toxin"/>
</dbReference>
<dbReference type="PANTHER" id="PTHR33755:SF9">
    <property type="entry name" value="TOXIN PARE1"/>
    <property type="match status" value="1"/>
</dbReference>
<dbReference type="PANTHER" id="PTHR33755">
    <property type="entry name" value="TOXIN PARE1-RELATED"/>
    <property type="match status" value="1"/>
</dbReference>
<dbReference type="Pfam" id="PF05016">
    <property type="entry name" value="ParE_toxin"/>
    <property type="match status" value="1"/>
</dbReference>
<dbReference type="PIRSF" id="PIRSF029218">
    <property type="entry name" value="ParE"/>
    <property type="match status" value="1"/>
</dbReference>
<evidence type="ECO:0000250" key="1"/>
<evidence type="ECO:0000305" key="2"/>
<gene>
    <name type="primary">parE1</name>
    <name type="ordered locus">MT2008</name>
</gene>